<dbReference type="EMBL" id="CP000469">
    <property type="protein sequence ID" value="ABK46893.1"/>
    <property type="molecule type" value="Genomic_DNA"/>
</dbReference>
<dbReference type="RefSeq" id="WP_011715834.1">
    <property type="nucleotide sequence ID" value="NC_008577.1"/>
</dbReference>
<dbReference type="STRING" id="94122.Shewana3_0655"/>
<dbReference type="KEGG" id="shn:Shewana3_0655"/>
<dbReference type="eggNOG" id="COG3112">
    <property type="taxonomic scope" value="Bacteria"/>
</dbReference>
<dbReference type="HOGENOM" id="CLU_139226_0_0_6"/>
<dbReference type="OrthoDB" id="5739292at2"/>
<dbReference type="Proteomes" id="UP000002589">
    <property type="component" value="Chromosome"/>
</dbReference>
<dbReference type="HAMAP" id="MF_01053">
    <property type="entry name" value="UPF0231"/>
    <property type="match status" value="1"/>
</dbReference>
<dbReference type="InterPro" id="IPR008249">
    <property type="entry name" value="UPF0231"/>
</dbReference>
<dbReference type="NCBIfam" id="NF003581">
    <property type="entry name" value="PRK05248.3-2"/>
    <property type="match status" value="1"/>
</dbReference>
<dbReference type="Pfam" id="PF06062">
    <property type="entry name" value="UPF0231"/>
    <property type="match status" value="1"/>
</dbReference>
<dbReference type="PIRSF" id="PIRSF006287">
    <property type="entry name" value="UCP006287"/>
    <property type="match status" value="1"/>
</dbReference>
<proteinExistence type="inferred from homology"/>
<organism>
    <name type="scientific">Shewanella sp. (strain ANA-3)</name>
    <dbReference type="NCBI Taxonomy" id="94122"/>
    <lineage>
        <taxon>Bacteria</taxon>
        <taxon>Pseudomonadati</taxon>
        <taxon>Pseudomonadota</taxon>
        <taxon>Gammaproteobacteria</taxon>
        <taxon>Alteromonadales</taxon>
        <taxon>Shewanellaceae</taxon>
        <taxon>Shewanella</taxon>
    </lineage>
</organism>
<feature type="chain" id="PRO_1000064368" description="UPF0231 protein Shewana3_0655">
    <location>
        <begin position="1"/>
        <end position="124"/>
    </location>
</feature>
<protein>
    <recommendedName>
        <fullName evidence="1">UPF0231 protein Shewana3_0655</fullName>
    </recommendedName>
</protein>
<accession>A0KSX4</accession>
<name>Y655_SHESA</name>
<sequence>MEYEFRRNSLTGTYLASFSMDHEVLGQWFSEELGPELAKIQQVLDIIKEIQAGKRDSWRLIGGDLTLDLDEEQARIYANALGFEQEYELEESMSLYDAESEAYCGLEDLEEALLSWYEFVQKGR</sequence>
<evidence type="ECO:0000255" key="1">
    <source>
        <dbReference type="HAMAP-Rule" id="MF_01053"/>
    </source>
</evidence>
<gene>
    <name type="ordered locus">Shewana3_0655</name>
</gene>
<comment type="similarity">
    <text evidence="1">Belongs to the UPF0231 family.</text>
</comment>
<reference key="1">
    <citation type="submission" date="2006-09" db="EMBL/GenBank/DDBJ databases">
        <title>Complete sequence of chromosome 1 of Shewanella sp. ANA-3.</title>
        <authorList>
            <person name="Copeland A."/>
            <person name="Lucas S."/>
            <person name="Lapidus A."/>
            <person name="Barry K."/>
            <person name="Detter J.C."/>
            <person name="Glavina del Rio T."/>
            <person name="Hammon N."/>
            <person name="Israni S."/>
            <person name="Dalin E."/>
            <person name="Tice H."/>
            <person name="Pitluck S."/>
            <person name="Chertkov O."/>
            <person name="Brettin T."/>
            <person name="Bruce D."/>
            <person name="Han C."/>
            <person name="Tapia R."/>
            <person name="Gilna P."/>
            <person name="Schmutz J."/>
            <person name="Larimer F."/>
            <person name="Land M."/>
            <person name="Hauser L."/>
            <person name="Kyrpides N."/>
            <person name="Kim E."/>
            <person name="Newman D."/>
            <person name="Salticov C."/>
            <person name="Konstantinidis K."/>
            <person name="Klappenback J."/>
            <person name="Tiedje J."/>
            <person name="Richardson P."/>
        </authorList>
    </citation>
    <scope>NUCLEOTIDE SEQUENCE [LARGE SCALE GENOMIC DNA]</scope>
    <source>
        <strain>ANA-3</strain>
    </source>
</reference>